<feature type="chain" id="PRO_0000344426" description="Putative uncharacterized protein DDB_G0292940">
    <location>
        <begin position="1"/>
        <end position="72"/>
    </location>
</feature>
<feature type="transmembrane region" description="Helical" evidence="1">
    <location>
        <begin position="33"/>
        <end position="53"/>
    </location>
</feature>
<gene>
    <name type="ORF">DDB_G0292940</name>
</gene>
<comment type="subcellular location">
    <subcellularLocation>
        <location evidence="2">Membrane</location>
        <topology evidence="2">Single-pass membrane protein</topology>
    </subcellularLocation>
</comment>
<evidence type="ECO:0000255" key="1"/>
<evidence type="ECO:0000305" key="2"/>
<accession>Q54CM6</accession>
<dbReference type="EMBL" id="AAFI02000197">
    <property type="protein sequence ID" value="EAL61019.1"/>
    <property type="molecule type" value="Genomic_DNA"/>
</dbReference>
<dbReference type="RefSeq" id="XP_629390.1">
    <property type="nucleotide sequence ID" value="XM_629388.1"/>
</dbReference>
<dbReference type="SMR" id="Q54CM6"/>
<dbReference type="PaxDb" id="44689-DDB0215530"/>
<dbReference type="EnsemblProtists" id="EAL61019">
    <property type="protein sequence ID" value="EAL61019"/>
    <property type="gene ID" value="DDB_G0292940"/>
</dbReference>
<dbReference type="GeneID" id="8628908"/>
<dbReference type="KEGG" id="ddi:DDB_G0292940"/>
<dbReference type="dictyBase" id="DDB_G0292940"/>
<dbReference type="VEuPathDB" id="AmoebaDB:DDB_G0292940"/>
<dbReference type="HOGENOM" id="CLU_2727545_0_0_1"/>
<dbReference type="InParanoid" id="Q54CM6"/>
<dbReference type="PRO" id="PR:Q54CM6"/>
<dbReference type="Proteomes" id="UP000002195">
    <property type="component" value="Chromosome 6"/>
</dbReference>
<dbReference type="GO" id="GO:0016020">
    <property type="term" value="C:membrane"/>
    <property type="evidence" value="ECO:0007669"/>
    <property type="project" value="UniProtKB-SubCell"/>
</dbReference>
<protein>
    <recommendedName>
        <fullName>Putative uncharacterized protein DDB_G0292940</fullName>
    </recommendedName>
</protein>
<sequence length="72" mass="8847">MFIFFINTPTPPNIFFSKNIKIKKLMRFSCTEVCIFFSLIFFFFFFFFCVNWGCENNLLSRKYQMNRDTCNF</sequence>
<organism>
    <name type="scientific">Dictyostelium discoideum</name>
    <name type="common">Social amoeba</name>
    <dbReference type="NCBI Taxonomy" id="44689"/>
    <lineage>
        <taxon>Eukaryota</taxon>
        <taxon>Amoebozoa</taxon>
        <taxon>Evosea</taxon>
        <taxon>Eumycetozoa</taxon>
        <taxon>Dictyostelia</taxon>
        <taxon>Dictyosteliales</taxon>
        <taxon>Dictyosteliaceae</taxon>
        <taxon>Dictyostelium</taxon>
    </lineage>
</organism>
<name>Y5530_DICDI</name>
<proteinExistence type="predicted"/>
<keyword id="KW-0472">Membrane</keyword>
<keyword id="KW-1185">Reference proteome</keyword>
<keyword id="KW-0812">Transmembrane</keyword>
<keyword id="KW-1133">Transmembrane helix</keyword>
<reference key="1">
    <citation type="journal article" date="2005" name="Nature">
        <title>The genome of the social amoeba Dictyostelium discoideum.</title>
        <authorList>
            <person name="Eichinger L."/>
            <person name="Pachebat J.A."/>
            <person name="Gloeckner G."/>
            <person name="Rajandream M.A."/>
            <person name="Sucgang R."/>
            <person name="Berriman M."/>
            <person name="Song J."/>
            <person name="Olsen R."/>
            <person name="Szafranski K."/>
            <person name="Xu Q."/>
            <person name="Tunggal B."/>
            <person name="Kummerfeld S."/>
            <person name="Madera M."/>
            <person name="Konfortov B.A."/>
            <person name="Rivero F."/>
            <person name="Bankier A.T."/>
            <person name="Lehmann R."/>
            <person name="Hamlin N."/>
            <person name="Davies R."/>
            <person name="Gaudet P."/>
            <person name="Fey P."/>
            <person name="Pilcher K."/>
            <person name="Chen G."/>
            <person name="Saunders D."/>
            <person name="Sodergren E.J."/>
            <person name="Davis P."/>
            <person name="Kerhornou A."/>
            <person name="Nie X."/>
            <person name="Hall N."/>
            <person name="Anjard C."/>
            <person name="Hemphill L."/>
            <person name="Bason N."/>
            <person name="Farbrother P."/>
            <person name="Desany B."/>
            <person name="Just E."/>
            <person name="Morio T."/>
            <person name="Rost R."/>
            <person name="Churcher C.M."/>
            <person name="Cooper J."/>
            <person name="Haydock S."/>
            <person name="van Driessche N."/>
            <person name="Cronin A."/>
            <person name="Goodhead I."/>
            <person name="Muzny D.M."/>
            <person name="Mourier T."/>
            <person name="Pain A."/>
            <person name="Lu M."/>
            <person name="Harper D."/>
            <person name="Lindsay R."/>
            <person name="Hauser H."/>
            <person name="James K.D."/>
            <person name="Quiles M."/>
            <person name="Madan Babu M."/>
            <person name="Saito T."/>
            <person name="Buchrieser C."/>
            <person name="Wardroper A."/>
            <person name="Felder M."/>
            <person name="Thangavelu M."/>
            <person name="Johnson D."/>
            <person name="Knights A."/>
            <person name="Loulseged H."/>
            <person name="Mungall K.L."/>
            <person name="Oliver K."/>
            <person name="Price C."/>
            <person name="Quail M.A."/>
            <person name="Urushihara H."/>
            <person name="Hernandez J."/>
            <person name="Rabbinowitsch E."/>
            <person name="Steffen D."/>
            <person name="Sanders M."/>
            <person name="Ma J."/>
            <person name="Kohara Y."/>
            <person name="Sharp S."/>
            <person name="Simmonds M.N."/>
            <person name="Spiegler S."/>
            <person name="Tivey A."/>
            <person name="Sugano S."/>
            <person name="White B."/>
            <person name="Walker D."/>
            <person name="Woodward J.R."/>
            <person name="Winckler T."/>
            <person name="Tanaka Y."/>
            <person name="Shaulsky G."/>
            <person name="Schleicher M."/>
            <person name="Weinstock G.M."/>
            <person name="Rosenthal A."/>
            <person name="Cox E.C."/>
            <person name="Chisholm R.L."/>
            <person name="Gibbs R.A."/>
            <person name="Loomis W.F."/>
            <person name="Platzer M."/>
            <person name="Kay R.R."/>
            <person name="Williams J.G."/>
            <person name="Dear P.H."/>
            <person name="Noegel A.A."/>
            <person name="Barrell B.G."/>
            <person name="Kuspa A."/>
        </authorList>
    </citation>
    <scope>NUCLEOTIDE SEQUENCE [LARGE SCALE GENOMIC DNA]</scope>
    <source>
        <strain>AX4</strain>
    </source>
</reference>